<proteinExistence type="evidence at transcript level"/>
<sequence length="514" mass="56066">MKMWKRRGQKKSMFLSSLLVCCMFASAEYSSCGEYEFFNQTSNSCQACPQCRPGQEPNMSCGHGMKDEGFACVPCPQGKYSKGKYEICRRHKDCNALYKATVREPGTAEKDAECGPCLPGYYMLENRARNLYAMVCHSCQNAPLNTKECKKTTEAIIKPPINPGSTTVLPHPGSPGQGHLATALIIAMSTIFIMAIAIVLIIMFYILKAKPNGQACCSGQVVKAVEAQTNKLEDKKDVPDNVVIFPEKEEYDKLKASPQKTVKSENDASSENEQLLSRSIDSDEEPTSDKLRSSEATNHNLCQANVGYKPDLCLLSLGLLDHRVVCNGTPASAGSQANNTQAPNHITSSNVSSMNAINNNNKTPGMLQSRRKKILDLYARTCHVTEGLSPTELPFDCLEKASRMLSSSYSSDAAVVKTWRHLAESFGLKRDEIGGMSDGLQLFERVSTAGYSIPDLLARLVQIERLDAVESLCADVLGSNEIVALVGRQSVNSFHSQLVCPSPCTSPSPRCASV</sequence>
<organism>
    <name type="scientific">Oryzias latipes</name>
    <name type="common">Japanese rice fish</name>
    <name type="synonym">Japanese killifish</name>
    <dbReference type="NCBI Taxonomy" id="8090"/>
    <lineage>
        <taxon>Eukaryota</taxon>
        <taxon>Metazoa</taxon>
        <taxon>Chordata</taxon>
        <taxon>Craniata</taxon>
        <taxon>Vertebrata</taxon>
        <taxon>Euteleostomi</taxon>
        <taxon>Actinopterygii</taxon>
        <taxon>Neopterygii</taxon>
        <taxon>Teleostei</taxon>
        <taxon>Neoteleostei</taxon>
        <taxon>Acanthomorphata</taxon>
        <taxon>Ovalentaria</taxon>
        <taxon>Atherinomorphae</taxon>
        <taxon>Beloniformes</taxon>
        <taxon>Adrianichthyidae</taxon>
        <taxon>Oryziinae</taxon>
        <taxon>Oryzias</taxon>
    </lineage>
</organism>
<accession>Q90VY2</accession>
<accession>Q90Z36</accession>
<protein>
    <recommendedName>
        <fullName>Tumor necrosis factor receptor superfamily member EDAR</fullName>
    </recommendedName>
    <alternativeName>
        <fullName>Ectodysplasin-A receptor</fullName>
    </alternativeName>
    <alternativeName>
        <fullName>Protein reduced scale-3</fullName>
        <shortName>RS-3</shortName>
    </alternativeName>
</protein>
<name>EDAR_ORYLA</name>
<evidence type="ECO:0000250" key="1"/>
<evidence type="ECO:0000255" key="2"/>
<evidence type="ECO:0000256" key="3">
    <source>
        <dbReference type="SAM" id="MobiDB-lite"/>
    </source>
</evidence>
<evidence type="ECO:0000305" key="4"/>
<feature type="signal peptide" evidence="2">
    <location>
        <begin position="1"/>
        <end position="27"/>
    </location>
</feature>
<feature type="chain" id="PRO_0000034610" description="Tumor necrosis factor receptor superfamily member EDAR">
    <location>
        <begin position="28"/>
        <end position="514"/>
    </location>
</feature>
<feature type="topological domain" description="Extracellular" evidence="2">
    <location>
        <begin position="28"/>
        <end position="183"/>
    </location>
</feature>
<feature type="transmembrane region" description="Helical" evidence="2">
    <location>
        <begin position="184"/>
        <end position="204"/>
    </location>
</feature>
<feature type="topological domain" description="Cytoplasmic" evidence="2">
    <location>
        <begin position="205"/>
        <end position="514"/>
    </location>
</feature>
<feature type="repeat" description="TNFR-Cys 1">
    <location>
        <begin position="31"/>
        <end position="72"/>
    </location>
</feature>
<feature type="repeat" description="TNFR-Cys 2">
    <location>
        <begin position="74"/>
        <end position="114"/>
    </location>
</feature>
<feature type="repeat" description="TNFR-Cys 3">
    <location>
        <begin position="116"/>
        <end position="149"/>
    </location>
</feature>
<feature type="domain" description="Death">
    <location>
        <begin position="403"/>
        <end position="476"/>
    </location>
</feature>
<feature type="region of interest" description="Disordered" evidence="3">
    <location>
        <begin position="254"/>
        <end position="294"/>
    </location>
</feature>
<feature type="compositionally biased region" description="Polar residues" evidence="3">
    <location>
        <begin position="267"/>
        <end position="279"/>
    </location>
</feature>
<feature type="glycosylation site" description="N-linked (GlcNAc...) asparagine" evidence="2">
    <location>
        <position position="39"/>
    </location>
</feature>
<feature type="glycosylation site" description="N-linked (GlcNAc...) asparagine" evidence="2">
    <location>
        <position position="58"/>
    </location>
</feature>
<feature type="disulfide bond" evidence="1">
    <location>
        <begin position="32"/>
        <end position="45"/>
    </location>
</feature>
<feature type="disulfide bond" evidence="1">
    <location>
        <begin position="48"/>
        <end position="61"/>
    </location>
</feature>
<feature type="disulfide bond" evidence="1">
    <location>
        <begin position="51"/>
        <end position="72"/>
    </location>
</feature>
<feature type="disulfide bond" evidence="1">
    <location>
        <begin position="75"/>
        <end position="88"/>
    </location>
</feature>
<feature type="disulfide bond" evidence="1">
    <location>
        <begin position="94"/>
        <end position="114"/>
    </location>
</feature>
<feature type="disulfide bond" evidence="1">
    <location>
        <begin position="117"/>
        <end position="136"/>
    </location>
</feature>
<feature type="disulfide bond" evidence="1">
    <location>
        <begin position="139"/>
        <end position="149"/>
    </location>
</feature>
<feature type="sequence variant" description="In strain: HNI.">
    <original>M</original>
    <variation>V</variation>
    <location>
        <position position="13"/>
    </location>
</feature>
<feature type="sequence variant" description="In strain: HNI.">
    <original>A</original>
    <variation>P</variation>
    <location>
        <position position="155"/>
    </location>
</feature>
<feature type="sequence variant" description="In strain: HNI.">
    <original>S</original>
    <variation>T</variation>
    <location>
        <position position="353"/>
    </location>
</feature>
<dbReference type="EMBL" id="AF364814">
    <property type="protein sequence ID" value="AAK83297.1"/>
    <property type="molecule type" value="mRNA"/>
</dbReference>
<dbReference type="EMBL" id="AF364815">
    <property type="protein sequence ID" value="AAK83298.1"/>
    <property type="molecule type" value="mRNA"/>
</dbReference>
<dbReference type="EMBL" id="AF364816">
    <property type="protein sequence ID" value="AAK83299.1"/>
    <property type="molecule type" value="mRNA"/>
</dbReference>
<dbReference type="RefSeq" id="NP_001098229.1">
    <property type="nucleotide sequence ID" value="NM_001104759.1"/>
</dbReference>
<dbReference type="RefSeq" id="XP_011487841.1">
    <property type="nucleotide sequence ID" value="XM_011489539.1"/>
</dbReference>
<dbReference type="RefSeq" id="XP_023806223.1">
    <property type="nucleotide sequence ID" value="XM_023950455.1"/>
</dbReference>
<dbReference type="SMR" id="Q90VY2"/>
<dbReference type="FunCoup" id="Q90VY2">
    <property type="interactions" value="657"/>
</dbReference>
<dbReference type="STRING" id="8090.ENSORLP00000033496"/>
<dbReference type="GlyCosmos" id="Q90VY2">
    <property type="glycosylation" value="2 sites, No reported glycans"/>
</dbReference>
<dbReference type="Ensembl" id="ENSORLT00000032421.1">
    <property type="protein sequence ID" value="ENSORLP00000033496.1"/>
    <property type="gene ID" value="ENSORLG00000015897.2"/>
</dbReference>
<dbReference type="GeneID" id="100049352"/>
<dbReference type="KEGG" id="ola:100049352"/>
<dbReference type="CTD" id="10913"/>
<dbReference type="eggNOG" id="ENOG502QRV5">
    <property type="taxonomic scope" value="Eukaryota"/>
</dbReference>
<dbReference type="GeneTree" id="ENSGT00940000153259"/>
<dbReference type="HOGENOM" id="CLU_039634_0_0_1"/>
<dbReference type="InParanoid" id="Q90VY2"/>
<dbReference type="OMA" id="CGENEYH"/>
<dbReference type="OrthoDB" id="9903718at2759"/>
<dbReference type="TreeFam" id="TF331385"/>
<dbReference type="Proteomes" id="UP000001038">
    <property type="component" value="Chromosome 21"/>
</dbReference>
<dbReference type="Proteomes" id="UP000265180">
    <property type="component" value="Unplaced"/>
</dbReference>
<dbReference type="Proteomes" id="UP000265200">
    <property type="component" value="Unplaced"/>
</dbReference>
<dbReference type="Bgee" id="ENSORLG00000015897">
    <property type="expression patterns" value="Expressed in pharyngeal gill and 3 other cell types or tissues"/>
</dbReference>
<dbReference type="GO" id="GO:0005886">
    <property type="term" value="C:plasma membrane"/>
    <property type="evidence" value="ECO:0000318"/>
    <property type="project" value="GO_Central"/>
</dbReference>
<dbReference type="GO" id="GO:0038023">
    <property type="term" value="F:signaling receptor activity"/>
    <property type="evidence" value="ECO:0000318"/>
    <property type="project" value="GO_Central"/>
</dbReference>
<dbReference type="GO" id="GO:0006915">
    <property type="term" value="P:apoptotic process"/>
    <property type="evidence" value="ECO:0007669"/>
    <property type="project" value="UniProtKB-KW"/>
</dbReference>
<dbReference type="GO" id="GO:0030154">
    <property type="term" value="P:cell differentiation"/>
    <property type="evidence" value="ECO:0007669"/>
    <property type="project" value="UniProtKB-KW"/>
</dbReference>
<dbReference type="GO" id="GO:0061972">
    <property type="term" value="P:dermal bone morphogenesis"/>
    <property type="evidence" value="ECO:0007669"/>
    <property type="project" value="Ensembl"/>
</dbReference>
<dbReference type="GO" id="GO:0007631">
    <property type="term" value="P:feeding behavior"/>
    <property type="evidence" value="ECO:0007669"/>
    <property type="project" value="Ensembl"/>
</dbReference>
<dbReference type="GO" id="GO:0033333">
    <property type="term" value="P:fin development"/>
    <property type="evidence" value="ECO:0007669"/>
    <property type="project" value="Ensembl"/>
</dbReference>
<dbReference type="GO" id="GO:0043123">
    <property type="term" value="P:positive regulation of canonical NF-kappaB signal transduction"/>
    <property type="evidence" value="ECO:0000318"/>
    <property type="project" value="GO_Central"/>
</dbReference>
<dbReference type="GO" id="GO:0046330">
    <property type="term" value="P:positive regulation of JNK cascade"/>
    <property type="evidence" value="ECO:0000318"/>
    <property type="project" value="GO_Central"/>
</dbReference>
<dbReference type="FunFam" id="2.10.50.10:FF:000077">
    <property type="entry name" value="Ectodysplasin A receptor"/>
    <property type="match status" value="1"/>
</dbReference>
<dbReference type="Gene3D" id="1.10.533.10">
    <property type="entry name" value="Death Domain, Fas"/>
    <property type="match status" value="1"/>
</dbReference>
<dbReference type="Gene3D" id="2.10.50.10">
    <property type="entry name" value="Tumor Necrosis Factor Receptor, subunit A, domain 2"/>
    <property type="match status" value="1"/>
</dbReference>
<dbReference type="InterPro" id="IPR011029">
    <property type="entry name" value="DEATH-like_dom_sf"/>
</dbReference>
<dbReference type="InterPro" id="IPR056762">
    <property type="entry name" value="Death_EDAR"/>
</dbReference>
<dbReference type="InterPro" id="IPR047526">
    <property type="entry name" value="TNR19/27/EDAR"/>
</dbReference>
<dbReference type="PANTHER" id="PTHR12120">
    <property type="entry name" value="TNFR-CYS DOMAIN-CONTAINING PROTEIN"/>
    <property type="match status" value="1"/>
</dbReference>
<dbReference type="PANTHER" id="PTHR12120:SF9">
    <property type="entry name" value="TUMOR NECROSIS FACTOR RECEPTOR SUPERFAMILY MEMBER EDAR"/>
    <property type="match status" value="1"/>
</dbReference>
<dbReference type="Pfam" id="PF24979">
    <property type="entry name" value="Death_EDAR"/>
    <property type="match status" value="1"/>
</dbReference>
<dbReference type="SUPFAM" id="SSF47986">
    <property type="entry name" value="DEATH domain"/>
    <property type="match status" value="1"/>
</dbReference>
<comment type="function">
    <text evidence="1">Receptor for EDA (By similarity). May mediate the activation of NF-kappa-B and JNK.</text>
</comment>
<comment type="subcellular location">
    <subcellularLocation>
        <location evidence="4">Membrane</location>
        <topology evidence="4">Single-pass type I membrane protein</topology>
    </subcellularLocation>
</comment>
<comment type="developmental stage">
    <text>Barely detectable on the body surface of 8 and 15 day old fish. In 30 day old fish, when scale development has started, expression is high in patches of epithelial cell clusters and at the posterior margins of growing scales.</text>
</comment>
<reference key="1">
    <citation type="journal article" date="2001" name="Curr. Biol.">
        <title>The medaka rs-3 locus required for scale development encodes ectodysplasin-A receptor.</title>
        <authorList>
            <person name="Kondo S."/>
            <person name="Kuwahara Y."/>
            <person name="Kondo M."/>
            <person name="Naruse K."/>
            <person name="Mitani H."/>
            <person name="Wakamatsu Y."/>
            <person name="Ozato K."/>
            <person name="Asakawa S."/>
            <person name="Shimizu N."/>
            <person name="Shima A."/>
        </authorList>
    </citation>
    <scope>NUCLEOTIDE SEQUENCE [MRNA]</scope>
    <source>
        <strain>AA2</strain>
        <strain>HNI</strain>
    </source>
</reference>
<keyword id="KW-0053">Apoptosis</keyword>
<keyword id="KW-0217">Developmental protein</keyword>
<keyword id="KW-0221">Differentiation</keyword>
<keyword id="KW-1015">Disulfide bond</keyword>
<keyword id="KW-0325">Glycoprotein</keyword>
<keyword id="KW-0472">Membrane</keyword>
<keyword id="KW-0675">Receptor</keyword>
<keyword id="KW-1185">Reference proteome</keyword>
<keyword id="KW-0677">Repeat</keyword>
<keyword id="KW-0732">Signal</keyword>
<keyword id="KW-0812">Transmembrane</keyword>
<keyword id="KW-1133">Transmembrane helix</keyword>
<gene>
    <name type="primary">edar</name>
    <name type="synonym">rs3</name>
</gene>